<dbReference type="EMBL" id="AF058922">
    <property type="protein sequence ID" value="AAC25561.1"/>
    <property type="molecule type" value="mRNA"/>
</dbReference>
<dbReference type="EMBL" id="AK222842">
    <property type="protein sequence ID" value="BAD96562.1"/>
    <property type="molecule type" value="mRNA"/>
</dbReference>
<dbReference type="EMBL" id="AK222854">
    <property type="protein sequence ID" value="BAD96574.1"/>
    <property type="molecule type" value="mRNA"/>
</dbReference>
<dbReference type="EMBL" id="AL445287">
    <property type="status" value="NOT_ANNOTATED_CDS"/>
    <property type="molecule type" value="Genomic_DNA"/>
</dbReference>
<dbReference type="EMBL" id="AL356481">
    <property type="status" value="NOT_ANNOTATED_CDS"/>
    <property type="molecule type" value="Genomic_DNA"/>
</dbReference>
<dbReference type="EMBL" id="BC030012">
    <property type="protein sequence ID" value="AAH30012.1"/>
    <property type="molecule type" value="mRNA"/>
</dbReference>
<dbReference type="EMBL" id="AL117584">
    <property type="protein sequence ID" value="CAB56006.1"/>
    <property type="molecule type" value="mRNA"/>
</dbReference>
<dbReference type="CCDS" id="CCDS35154.1">
    <molecule id="Q53GS7-1"/>
</dbReference>
<dbReference type="CCDS" id="CCDS6904.1">
    <molecule id="Q53GS7-2"/>
</dbReference>
<dbReference type="PIR" id="T17316">
    <property type="entry name" value="T17316"/>
</dbReference>
<dbReference type="RefSeq" id="NP_001003722.1">
    <molecule id="Q53GS7-1"/>
    <property type="nucleotide sequence ID" value="NM_001003722.2"/>
</dbReference>
<dbReference type="RefSeq" id="NP_001490.1">
    <molecule id="Q53GS7-2"/>
    <property type="nucleotide sequence ID" value="NM_001499.2"/>
</dbReference>
<dbReference type="PDB" id="6B4F">
    <property type="method" value="X-ray"/>
    <property type="resolution" value="2.81 A"/>
    <property type="chains" value="A/B=382-698"/>
</dbReference>
<dbReference type="PDB" id="6B4I">
    <property type="method" value="X-ray"/>
    <property type="resolution" value="3.62 A"/>
    <property type="chains" value="A/B=382-698"/>
</dbReference>
<dbReference type="PDB" id="6B4J">
    <property type="method" value="X-ray"/>
    <property type="resolution" value="3.40 A"/>
    <property type="chains" value="A/B=382-698"/>
</dbReference>
<dbReference type="PDBsum" id="6B4F"/>
<dbReference type="PDBsum" id="6B4I"/>
<dbReference type="PDBsum" id="6B4J"/>
<dbReference type="SMR" id="Q53GS7"/>
<dbReference type="BioGRID" id="108995">
    <property type="interactions" value="164"/>
</dbReference>
<dbReference type="ComplexPortal" id="CPX-873">
    <property type="entry name" value="Nuclear pore complex"/>
</dbReference>
<dbReference type="CORUM" id="Q53GS7"/>
<dbReference type="FunCoup" id="Q53GS7">
    <property type="interactions" value="2976"/>
</dbReference>
<dbReference type="IntAct" id="Q53GS7">
    <property type="interactions" value="131"/>
</dbReference>
<dbReference type="STRING" id="9606.ENSP00000308622"/>
<dbReference type="TCDB" id="1.I.1.1.3">
    <property type="family name" value="the nuclear pore complex (npc) family"/>
</dbReference>
<dbReference type="TCDB" id="3.A.18.1.1">
    <property type="family name" value="the nuclear mrna exporter (mrna-e) family"/>
</dbReference>
<dbReference type="GlyGen" id="Q53GS7">
    <property type="glycosylation" value="1 site, 1 O-linked glycan (1 site)"/>
</dbReference>
<dbReference type="iPTMnet" id="Q53GS7"/>
<dbReference type="PhosphoSitePlus" id="Q53GS7"/>
<dbReference type="SwissPalm" id="Q53GS7"/>
<dbReference type="BioMuta" id="GLE1"/>
<dbReference type="DMDM" id="83288218"/>
<dbReference type="jPOST" id="Q53GS7"/>
<dbReference type="MassIVE" id="Q53GS7"/>
<dbReference type="PaxDb" id="9606-ENSP00000308622"/>
<dbReference type="PeptideAtlas" id="Q53GS7"/>
<dbReference type="ProteomicsDB" id="62487">
    <molecule id="Q53GS7-1"/>
</dbReference>
<dbReference type="ProteomicsDB" id="62488">
    <molecule id="Q53GS7-2"/>
</dbReference>
<dbReference type="Pumba" id="Q53GS7"/>
<dbReference type="Antibodypedia" id="31163">
    <property type="antibodies" value="202 antibodies from 31 providers"/>
</dbReference>
<dbReference type="DNASU" id="2733"/>
<dbReference type="Ensembl" id="ENST00000309971.9">
    <molecule id="Q53GS7-1"/>
    <property type="protein sequence ID" value="ENSP00000308622.5"/>
    <property type="gene ID" value="ENSG00000119392.16"/>
</dbReference>
<dbReference type="Ensembl" id="ENST00000372770.4">
    <molecule id="Q53GS7-2"/>
    <property type="protein sequence ID" value="ENSP00000361856.4"/>
    <property type="gene ID" value="ENSG00000119392.16"/>
</dbReference>
<dbReference type="GeneID" id="2733"/>
<dbReference type="KEGG" id="hsa:2733"/>
<dbReference type="MANE-Select" id="ENST00000309971.9">
    <property type="protein sequence ID" value="ENSP00000308622.5"/>
    <property type="RefSeq nucleotide sequence ID" value="NM_001003722.2"/>
    <property type="RefSeq protein sequence ID" value="NP_001003722.1"/>
</dbReference>
<dbReference type="UCSC" id="uc004bvi.4">
    <molecule id="Q53GS7-1"/>
    <property type="organism name" value="human"/>
</dbReference>
<dbReference type="AGR" id="HGNC:4315"/>
<dbReference type="CTD" id="2733"/>
<dbReference type="DisGeNET" id="2733"/>
<dbReference type="GeneCards" id="GLE1"/>
<dbReference type="HGNC" id="HGNC:4315">
    <property type="gene designation" value="GLE1"/>
</dbReference>
<dbReference type="HPA" id="ENSG00000119392">
    <property type="expression patterns" value="Low tissue specificity"/>
</dbReference>
<dbReference type="MalaCards" id="GLE1"/>
<dbReference type="MIM" id="253310">
    <property type="type" value="phenotype"/>
</dbReference>
<dbReference type="MIM" id="603371">
    <property type="type" value="gene"/>
</dbReference>
<dbReference type="MIM" id="611890">
    <property type="type" value="phenotype"/>
</dbReference>
<dbReference type="neXtProt" id="NX_Q53GS7"/>
<dbReference type="OpenTargets" id="ENSG00000119392"/>
<dbReference type="Orphanet" id="803">
    <property type="disease" value="Amyotrophic lateral sclerosis"/>
</dbReference>
<dbReference type="Orphanet" id="53696">
    <property type="disease" value="Arthrogryposis-anterior horn cell disease syndrome"/>
</dbReference>
<dbReference type="Orphanet" id="1486">
    <property type="disease" value="Lethal congenital contracture syndrome type 1"/>
</dbReference>
<dbReference type="PharmGKB" id="PA28718"/>
<dbReference type="VEuPathDB" id="HostDB:ENSG00000119392"/>
<dbReference type="eggNOG" id="KOG2412">
    <property type="taxonomic scope" value="Eukaryota"/>
</dbReference>
<dbReference type="GeneTree" id="ENSGT00390000012903"/>
<dbReference type="HOGENOM" id="CLU_024662_1_0_1"/>
<dbReference type="InParanoid" id="Q53GS7"/>
<dbReference type="OMA" id="AYMYKES"/>
<dbReference type="OrthoDB" id="420884at2759"/>
<dbReference type="PAN-GO" id="Q53GS7">
    <property type="GO annotations" value="8 GO annotations based on evolutionary models"/>
</dbReference>
<dbReference type="PhylomeDB" id="Q53GS7"/>
<dbReference type="TreeFam" id="TF324158"/>
<dbReference type="PathwayCommons" id="Q53GS7"/>
<dbReference type="Reactome" id="R-HSA-159236">
    <property type="pathway name" value="Transport of Mature mRNA derived from an Intron-Containing Transcript"/>
</dbReference>
<dbReference type="SignaLink" id="Q53GS7"/>
<dbReference type="SIGNOR" id="Q53GS7"/>
<dbReference type="BioGRID-ORCS" id="2733">
    <property type="hits" value="497 hits in 1168 CRISPR screens"/>
</dbReference>
<dbReference type="CD-CODE" id="232F8A39">
    <property type="entry name" value="P-body"/>
</dbReference>
<dbReference type="CD-CODE" id="D6A53B8E">
    <property type="entry name" value="Nuclear pore complex"/>
</dbReference>
<dbReference type="CD-CODE" id="DEE660B4">
    <property type="entry name" value="Stress granule"/>
</dbReference>
<dbReference type="CD-CODE" id="E1879998">
    <property type="entry name" value="Synthetic Condensate 000375"/>
</dbReference>
<dbReference type="ChiTaRS" id="GLE1">
    <property type="organism name" value="human"/>
</dbReference>
<dbReference type="GeneWiki" id="GLE1L"/>
<dbReference type="GenomeRNAi" id="2733"/>
<dbReference type="Pharos" id="Q53GS7">
    <property type="development level" value="Tbio"/>
</dbReference>
<dbReference type="PRO" id="PR:Q53GS7"/>
<dbReference type="Proteomes" id="UP000005640">
    <property type="component" value="Chromosome 9"/>
</dbReference>
<dbReference type="RNAct" id="Q53GS7">
    <property type="molecule type" value="protein"/>
</dbReference>
<dbReference type="Bgee" id="ENSG00000119392">
    <property type="expression patterns" value="Expressed in buccal mucosa cell and 184 other cell types or tissues"/>
</dbReference>
<dbReference type="GO" id="GO:0005814">
    <property type="term" value="C:centriole"/>
    <property type="evidence" value="ECO:0000314"/>
    <property type="project" value="CACAO"/>
</dbReference>
<dbReference type="GO" id="GO:0005813">
    <property type="term" value="C:centrosome"/>
    <property type="evidence" value="ECO:0000314"/>
    <property type="project" value="CACAO"/>
</dbReference>
<dbReference type="GO" id="GO:0036064">
    <property type="term" value="C:ciliary basal body"/>
    <property type="evidence" value="ECO:0000314"/>
    <property type="project" value="CACAO"/>
</dbReference>
<dbReference type="GO" id="GO:0005737">
    <property type="term" value="C:cytoplasm"/>
    <property type="evidence" value="ECO:0000318"/>
    <property type="project" value="GO_Central"/>
</dbReference>
<dbReference type="GO" id="GO:0005829">
    <property type="term" value="C:cytosol"/>
    <property type="evidence" value="ECO:0000314"/>
    <property type="project" value="HPA"/>
</dbReference>
<dbReference type="GO" id="GO:0005615">
    <property type="term" value="C:extracellular space"/>
    <property type="evidence" value="ECO:0007005"/>
    <property type="project" value="UniProtKB"/>
</dbReference>
<dbReference type="GO" id="GO:0016020">
    <property type="term" value="C:membrane"/>
    <property type="evidence" value="ECO:0007005"/>
    <property type="project" value="UniProtKB"/>
</dbReference>
<dbReference type="GO" id="GO:0005635">
    <property type="term" value="C:nuclear envelope"/>
    <property type="evidence" value="ECO:0000314"/>
    <property type="project" value="CACAO"/>
</dbReference>
<dbReference type="GO" id="GO:0031965">
    <property type="term" value="C:nuclear membrane"/>
    <property type="evidence" value="ECO:0000314"/>
    <property type="project" value="HPA"/>
</dbReference>
<dbReference type="GO" id="GO:0005643">
    <property type="term" value="C:nuclear pore"/>
    <property type="evidence" value="ECO:0000304"/>
    <property type="project" value="ProtInc"/>
</dbReference>
<dbReference type="GO" id="GO:0044614">
    <property type="term" value="C:nuclear pore cytoplasmic filaments"/>
    <property type="evidence" value="ECO:0000318"/>
    <property type="project" value="GO_Central"/>
</dbReference>
<dbReference type="GO" id="GO:0005730">
    <property type="term" value="C:nucleolus"/>
    <property type="evidence" value="ECO:0000314"/>
    <property type="project" value="HPA"/>
</dbReference>
<dbReference type="GO" id="GO:0042802">
    <property type="term" value="F:identical protein binding"/>
    <property type="evidence" value="ECO:0000353"/>
    <property type="project" value="IntAct"/>
</dbReference>
<dbReference type="GO" id="GO:0000822">
    <property type="term" value="F:inositol hexakisphosphate binding"/>
    <property type="evidence" value="ECO:0000318"/>
    <property type="project" value="GO_Central"/>
</dbReference>
<dbReference type="GO" id="GO:0005543">
    <property type="term" value="F:phospholipid binding"/>
    <property type="evidence" value="ECO:0000318"/>
    <property type="project" value="GO_Central"/>
</dbReference>
<dbReference type="GO" id="GO:0031369">
    <property type="term" value="F:translation initiation factor binding"/>
    <property type="evidence" value="ECO:0000318"/>
    <property type="project" value="GO_Central"/>
</dbReference>
<dbReference type="GO" id="GO:0006406">
    <property type="term" value="P:mRNA export from nucleus"/>
    <property type="evidence" value="ECO:0000304"/>
    <property type="project" value="ProtInc"/>
</dbReference>
<dbReference type="GO" id="GO:0006913">
    <property type="term" value="P:nucleocytoplasmic transport"/>
    <property type="evidence" value="ECO:0000303"/>
    <property type="project" value="ComplexPortal"/>
</dbReference>
<dbReference type="GO" id="GO:0016973">
    <property type="term" value="P:poly(A)+ mRNA export from nucleus"/>
    <property type="evidence" value="ECO:0000318"/>
    <property type="project" value="GO_Central"/>
</dbReference>
<dbReference type="GO" id="GO:0015031">
    <property type="term" value="P:protein transport"/>
    <property type="evidence" value="ECO:0007669"/>
    <property type="project" value="UniProtKB-KW"/>
</dbReference>
<dbReference type="FunFam" id="1.25.40.510:FF:000001">
    <property type="entry name" value="Nucleoporin GLE1 isoform 1"/>
    <property type="match status" value="1"/>
</dbReference>
<dbReference type="Gene3D" id="1.25.40.510">
    <property type="entry name" value="GLE1-like"/>
    <property type="match status" value="1"/>
</dbReference>
<dbReference type="InterPro" id="IPR012476">
    <property type="entry name" value="GLE1"/>
</dbReference>
<dbReference type="InterPro" id="IPR038506">
    <property type="entry name" value="GLE1-like_sf"/>
</dbReference>
<dbReference type="PANTHER" id="PTHR12960">
    <property type="entry name" value="GLE-1-RELATED"/>
    <property type="match status" value="1"/>
</dbReference>
<dbReference type="PANTHER" id="PTHR12960:SF0">
    <property type="entry name" value="MRNA EXPORT FACTOR GLE1"/>
    <property type="match status" value="1"/>
</dbReference>
<dbReference type="Pfam" id="PF07817">
    <property type="entry name" value="GLE1"/>
    <property type="match status" value="1"/>
</dbReference>
<sequence>MPSEGRCWETLKALRSSDKGRLCYYRDWLLRREDVLEECMSLPKLSSYSGWVVEHVLPHMQENQPLSETSPSSTSASALDQPSFVPKSPDASSAFSPASPATPNGTKGKDESQHTESMVLQSSRGIKVEGCVRMYELVHRMKGTEGLRLWQEEQERKVQALSEMASEQLKRFDEWKELKQHKEFQDLREVMEKSSREALGHQEKLKAEHRHRAKILNLKLREAEQQRVKQAEQERLRKEEGQIRLRALYALQEEMLQLSQQLDASEQHKALLKVDLAAFQTRGNQLCSLISGIIRASSESSYPTAESQAEAERALREMRDLLMNLGQEITRACEDKRRQDEEEAQVKLQEAQMQQGPEAHKEPPAPSQGPGGKQNEDLQVKVQDITMQWYQQLQDASMQCVLTFEGLTNSKDSQAKKIKMDLQKAATIPVSQISTIAGSKLKEIFDKIHSLLSGKPVQSGGRSVSVTLNPQGLDFVQYKLAEKFVKQGEEEVASHHEAAFPIAVVASGIWELHPRVGDLILAHLHKKCPYSVPFYPTFKEGMALEDYQRMLGYQVKDSKVEQQDNFLKRMSGMIRLYAAIIQLRWPYGNRQEIHPHGLNHGWRWLAQILNMEPLSDVTATLLFDFLEVCGNALMKQYQVQFWKMLILIKEDYFPRIEAITSSGQMGSFIRLKQFLEKCLQHKDIPVPKGFLTSSFWRS</sequence>
<accession>Q53GS7</accession>
<accession>O75458</accession>
<accession>Q53GT9</accession>
<accession>Q5VVU1</accession>
<accession>Q8NCP6</accession>
<accession>Q9UFL6</accession>
<evidence type="ECO:0000255" key="1"/>
<evidence type="ECO:0000256" key="2">
    <source>
        <dbReference type="SAM" id="MobiDB-lite"/>
    </source>
</evidence>
<evidence type="ECO:0000269" key="3">
    <source>
    </source>
</evidence>
<evidence type="ECO:0000269" key="4">
    <source>
    </source>
</evidence>
<evidence type="ECO:0000269" key="5">
    <source>
    </source>
</evidence>
<evidence type="ECO:0000269" key="6">
    <source>
    </source>
</evidence>
<evidence type="ECO:0000269" key="7">
    <source>
    </source>
</evidence>
<evidence type="ECO:0000269" key="8">
    <source>
    </source>
</evidence>
<evidence type="ECO:0000303" key="9">
    <source>
    </source>
</evidence>
<evidence type="ECO:0000303" key="10">
    <source>
    </source>
</evidence>
<evidence type="ECO:0000303" key="11">
    <source>
    </source>
</evidence>
<evidence type="ECO:0000303" key="12">
    <source ref="2"/>
</evidence>
<evidence type="ECO:0000305" key="13"/>
<evidence type="ECO:0000312" key="14">
    <source>
        <dbReference type="HGNC" id="HGNC:4315"/>
    </source>
</evidence>
<evidence type="ECO:0007744" key="15">
    <source>
    </source>
</evidence>
<evidence type="ECO:0007744" key="16">
    <source>
    </source>
</evidence>
<evidence type="ECO:0007744" key="17">
    <source>
    </source>
</evidence>
<evidence type="ECO:0007829" key="18">
    <source>
        <dbReference type="PDB" id="6B4F"/>
    </source>
</evidence>
<evidence type="ECO:0007829" key="19">
    <source>
        <dbReference type="PDB" id="6B4J"/>
    </source>
</evidence>
<proteinExistence type="evidence at protein level"/>
<name>GLE1_HUMAN</name>
<gene>
    <name type="primary">GLE1</name>
    <name type="synonym">GLE1L</name>
</gene>
<comment type="function">
    <text evidence="3 6 8">Required for the export of mRNAs containing poly(A) tails from the nucleus into the cytoplasm. May be involved in the terminal step of the mRNA transport through the nuclear pore complex (NPC).</text>
</comment>
<comment type="subunit">
    <text evidence="4 6">Associated with the NPC, however it may not be a stable component of the NPC complex since it shuttles between the nucleus and the cytoplasm. Interacts with nuclear pore complex proteins NUP155 and NUP42. Isoform 2 does not interact with NUP42. Able to form a heterotrimer with NUP155 and NUP42 in vitro.</text>
</comment>
<comment type="interaction">
    <interactant intactId="EBI-1955541">
        <id>Q53GS7</id>
    </interactant>
    <interactant intactId="EBI-14199987">
        <id>Q9Y575-3</id>
        <label>ASB3</label>
    </interactant>
    <organismsDiffer>false</organismsDiffer>
    <experiments>3</experiments>
</comment>
<comment type="interaction">
    <interactant intactId="EBI-1955541">
        <id>Q53GS7</id>
    </interactant>
    <interactant intactId="EBI-718459">
        <id>Q9UII2</id>
        <label>ATP5IF1</label>
    </interactant>
    <organismsDiffer>false</organismsDiffer>
    <experiments>3</experiments>
</comment>
<comment type="interaction">
    <interactant intactId="EBI-1955541">
        <id>Q53GS7</id>
    </interactant>
    <interactant intactId="EBI-749503">
        <id>Q16520</id>
        <label>BATF</label>
    </interactant>
    <organismsDiffer>false</organismsDiffer>
    <experiments>3</experiments>
</comment>
<comment type="interaction">
    <interactant intactId="EBI-1955541">
        <id>Q53GS7</id>
    </interactant>
    <interactant intactId="EBI-741753">
        <id>Q00994</id>
        <label>BEX3</label>
    </interactant>
    <organismsDiffer>false</organismsDiffer>
    <experiments>3</experiments>
</comment>
<comment type="interaction">
    <interactant intactId="EBI-1955541">
        <id>Q53GS7</id>
    </interactant>
    <interactant intactId="EBI-395261">
        <id>P24863</id>
        <label>CCNC</label>
    </interactant>
    <organismsDiffer>false</organismsDiffer>
    <experiments>3</experiments>
</comment>
<comment type="interaction">
    <interactant intactId="EBI-1955541">
        <id>Q53GS7</id>
    </interactant>
    <interactant intactId="EBI-11526150">
        <id>Q8NHQ1-3</id>
        <label>CEP70</label>
    </interactant>
    <organismsDiffer>false</organismsDiffer>
    <experiments>3</experiments>
</comment>
<comment type="interaction">
    <interactant intactId="EBI-1955541">
        <id>Q53GS7</id>
    </interactant>
    <interactant intactId="EBI-4402346">
        <id>P51798</id>
        <label>CLCN7</label>
    </interactant>
    <organismsDiffer>false</organismsDiffer>
    <experiments>3</experiments>
</comment>
<comment type="interaction">
    <interactant intactId="EBI-1955541">
        <id>Q53GS7</id>
    </interactant>
    <interactant intactId="EBI-350590">
        <id>Q9UNS2</id>
        <label>COPS3</label>
    </interactant>
    <organismsDiffer>false</organismsDiffer>
    <experiments>3</experiments>
</comment>
<comment type="interaction">
    <interactant intactId="EBI-1955541">
        <id>Q53GS7</id>
    </interactant>
    <interactant intactId="EBI-77321">
        <id>Q9UER7</id>
        <label>DAXX</label>
    </interactant>
    <organismsDiffer>false</organismsDiffer>
    <experiments>3</experiments>
</comment>
<comment type="interaction">
    <interactant intactId="EBI-1955541">
        <id>Q53GS7</id>
    </interactant>
    <interactant intactId="EBI-711990">
        <id>O00303</id>
        <label>EIF3F</label>
    </interactant>
    <organismsDiffer>false</organismsDiffer>
    <experiments>2</experiments>
</comment>
<comment type="interaction">
    <interactant intactId="EBI-1955541">
        <id>Q53GS7</id>
    </interactant>
    <interactant intactId="EBI-1223394">
        <id>Q8TAG9</id>
        <label>EXOC6</label>
    </interactant>
    <organismsDiffer>false</organismsDiffer>
    <experiments>3</experiments>
</comment>
<comment type="interaction">
    <interactant intactId="EBI-1955541">
        <id>Q53GS7</id>
    </interactant>
    <interactant intactId="EBI-12955347">
        <id>P58499</id>
        <label>FAM3B</label>
    </interactant>
    <organismsDiffer>false</organismsDiffer>
    <experiments>3</experiments>
</comment>
<comment type="interaction">
    <interactant intactId="EBI-1955541">
        <id>Q53GS7</id>
    </interactant>
    <interactant intactId="EBI-8468186">
        <id>Q8IZU1</id>
        <label>FAM9A</label>
    </interactant>
    <organismsDiffer>false</organismsDiffer>
    <experiments>3</experiments>
</comment>
<comment type="interaction">
    <interactant intactId="EBI-1955541">
        <id>Q53GS7</id>
    </interactant>
    <interactant intactId="EBI-81610">
        <id>O15287</id>
        <label>FANCG</label>
    </interactant>
    <organismsDiffer>false</organismsDiffer>
    <experiments>3</experiments>
</comment>
<comment type="interaction">
    <interactant intactId="EBI-1955541">
        <id>Q53GS7</id>
    </interactant>
    <interactant intactId="EBI-10691738">
        <id>P06241-3</id>
        <label>FYN</label>
    </interactant>
    <organismsDiffer>false</organismsDiffer>
    <experiments>3</experiments>
</comment>
<comment type="interaction">
    <interactant intactId="EBI-1955541">
        <id>Q53GS7</id>
    </interactant>
    <interactant intactId="EBI-3933251">
        <id>Q9NS71</id>
        <label>GKN1</label>
    </interactant>
    <organismsDiffer>false</organismsDiffer>
    <experiments>3</experiments>
</comment>
<comment type="interaction">
    <interactant intactId="EBI-1955541">
        <id>Q53GS7</id>
    </interactant>
    <interactant intactId="EBI-1955541">
        <id>Q53GS7</id>
        <label>GLE1</label>
    </interactant>
    <organismsDiffer>false</organismsDiffer>
    <experiments>5</experiments>
</comment>
<comment type="interaction">
    <interactant intactId="EBI-1955541">
        <id>Q53GS7</id>
    </interactant>
    <interactant intactId="EBI-6447217">
        <id>O75409</id>
        <label>H2AP</label>
    </interactant>
    <organismsDiffer>false</organismsDiffer>
    <experiments>3</experiments>
</comment>
<comment type="interaction">
    <interactant intactId="EBI-1955541">
        <id>Q53GS7</id>
    </interactant>
    <interactant intactId="EBI-21761225">
        <id>P26439</id>
        <label>HSD3B2</label>
    </interactant>
    <organismsDiffer>false</organismsDiffer>
    <experiments>3</experiments>
</comment>
<comment type="interaction">
    <interactant intactId="EBI-1955541">
        <id>Q53GS7</id>
    </interactant>
    <interactant intactId="EBI-9091197">
        <id>Q8IY31-3</id>
        <label>IFT20</label>
    </interactant>
    <organismsDiffer>false</organismsDiffer>
    <experiments>3</experiments>
</comment>
<comment type="interaction">
    <interactant intactId="EBI-1955541">
        <id>Q53GS7</id>
    </interactant>
    <interactant intactId="EBI-21602071">
        <id>Q8WYH8-2</id>
        <label>ING5</label>
    </interactant>
    <organismsDiffer>false</organismsDiffer>
    <experiments>3</experiments>
</comment>
<comment type="interaction">
    <interactant intactId="EBI-1955541">
        <id>Q53GS7</id>
    </interactant>
    <interactant intactId="EBI-714379">
        <id>Q9Y2M5</id>
        <label>KLHL20</label>
    </interactant>
    <organismsDiffer>false</organismsDiffer>
    <experiments>3</experiments>
</comment>
<comment type="interaction">
    <interactant intactId="EBI-1955541">
        <id>Q53GS7</id>
    </interactant>
    <interactant intactId="EBI-749878">
        <id>Q8IYD9</id>
        <label>LAS2</label>
    </interactant>
    <organismsDiffer>false</organismsDiffer>
    <experiments>3</experiments>
</comment>
<comment type="interaction">
    <interactant intactId="EBI-1955541">
        <id>Q53GS7</id>
    </interactant>
    <interactant intactId="EBI-8474075">
        <id>Q68G74</id>
        <label>LHX8</label>
    </interactant>
    <organismsDiffer>false</organismsDiffer>
    <experiments>3</experiments>
</comment>
<comment type="interaction">
    <interactant intactId="EBI-1955541">
        <id>Q53GS7</id>
    </interactant>
    <interactant intactId="EBI-741835">
        <id>Q96M61</id>
        <label>MAGEB18</label>
    </interactant>
    <organismsDiffer>false</organismsDiffer>
    <experiments>3</experiments>
</comment>
<comment type="interaction">
    <interactant intactId="EBI-1955541">
        <id>Q53GS7</id>
    </interactant>
    <interactant intactId="EBI-5651487">
        <id>Q9UBF1</id>
        <label>MAGEC2</label>
    </interactant>
    <organismsDiffer>false</organismsDiffer>
    <experiments>3</experiments>
</comment>
<comment type="interaction">
    <interactant intactId="EBI-1955541">
        <id>Q53GS7</id>
    </interactant>
    <interactant intactId="EBI-3911344">
        <id>P27338</id>
        <label>MAOB</label>
    </interactant>
    <organismsDiffer>false</organismsDiffer>
    <experiments>3</experiments>
</comment>
<comment type="interaction">
    <interactant intactId="EBI-1955541">
        <id>Q53GS7</id>
    </interactant>
    <interactant intactId="EBI-10698053">
        <id>Q9Y483-4</id>
        <label>MTF2</label>
    </interactant>
    <organismsDiffer>false</organismsDiffer>
    <experiments>3</experiments>
</comment>
<comment type="interaction">
    <interactant intactId="EBI-1955541">
        <id>Q53GS7</id>
    </interactant>
    <interactant intactId="EBI-2880203">
        <id>O76041</id>
        <label>NEBL</label>
    </interactant>
    <organismsDiffer>false</organismsDiffer>
    <experiments>3</experiments>
</comment>
<comment type="interaction">
    <interactant intactId="EBI-1955541">
        <id>Q53GS7</id>
    </interactant>
    <interactant intactId="EBI-726369">
        <id>Q16621</id>
        <label>NFE2</label>
    </interactant>
    <organismsDiffer>false</organismsDiffer>
    <experiments>3</experiments>
</comment>
<comment type="interaction">
    <interactant intactId="EBI-1955541">
        <id>Q53GS7</id>
    </interactant>
    <interactant intactId="EBI-1051262">
        <id>Q9Y239</id>
        <label>NOD1</label>
    </interactant>
    <organismsDiffer>false</organismsDiffer>
    <experiments>3</experiments>
</comment>
<comment type="interaction">
    <interactant intactId="EBI-1955541">
        <id>Q53GS7</id>
    </interactant>
    <interactant intactId="EBI-8466445">
        <id>A5D8V7</id>
        <label>ODAD3</label>
    </interactant>
    <organismsDiffer>false</organismsDiffer>
    <experiments>3</experiments>
</comment>
<comment type="interaction">
    <interactant intactId="EBI-1955541">
        <id>Q53GS7</id>
    </interactant>
    <interactant intactId="EBI-1058491">
        <id>Q96FW1</id>
        <label>OTUB1</label>
    </interactant>
    <organismsDiffer>false</organismsDiffer>
    <experiments>3</experiments>
</comment>
<comment type="interaction">
    <interactant intactId="EBI-1955541">
        <id>Q53GS7</id>
    </interactant>
    <interactant intactId="EBI-22012354">
        <id>Q9BR81</id>
        <label>PCDHGC3</label>
    </interactant>
    <organismsDiffer>false</organismsDiffer>
    <experiments>3</experiments>
</comment>
<comment type="interaction">
    <interactant intactId="EBI-1955541">
        <id>Q53GS7</id>
    </interactant>
    <interactant intactId="EBI-12067280">
        <id>Q29RF7-3</id>
        <label>PDS5A</label>
    </interactant>
    <organismsDiffer>false</organismsDiffer>
    <experiments>3</experiments>
</comment>
<comment type="interaction">
    <interactant intactId="EBI-1955541">
        <id>Q53GS7</id>
    </interactant>
    <interactant intactId="EBI-629434">
        <id>O75925</id>
        <label>PIAS1</label>
    </interactant>
    <organismsDiffer>false</organismsDiffer>
    <experiments>3</experiments>
</comment>
<comment type="interaction">
    <interactant intactId="EBI-1955541">
        <id>Q53GS7</id>
    </interactant>
    <interactant intactId="EBI-438710">
        <id>Q9NS23-4</id>
        <label>RASSF1</label>
    </interactant>
    <organismsDiffer>false</organismsDiffer>
    <experiments>3</experiments>
</comment>
<comment type="interaction">
    <interactant intactId="EBI-1955541">
        <id>Q53GS7</id>
    </interactant>
    <interactant intactId="EBI-745810">
        <id>Q96EN9</id>
        <label>REX1BD</label>
    </interactant>
    <organismsDiffer>false</organismsDiffer>
    <experiments>3</experiments>
</comment>
<comment type="interaction">
    <interactant intactId="EBI-1955541">
        <id>Q53GS7</id>
    </interactant>
    <interactant intactId="EBI-3918154">
        <id>Q9UGC6</id>
        <label>RGS17</label>
    </interactant>
    <organismsDiffer>false</organismsDiffer>
    <experiments>3</experiments>
</comment>
<comment type="interaction">
    <interactant intactId="EBI-1955541">
        <id>Q53GS7</id>
    </interactant>
    <interactant intactId="EBI-743938">
        <id>Q96D59</id>
        <label>RNF183</label>
    </interactant>
    <organismsDiffer>false</organismsDiffer>
    <experiments>3</experiments>
</comment>
<comment type="interaction">
    <interactant intactId="EBI-1955541">
        <id>Q53GS7</id>
    </interactant>
    <interactant intactId="EBI-2340642">
        <id>Q969K3</id>
        <label>RNF34</label>
    </interactant>
    <organismsDiffer>false</organismsDiffer>
    <experiments>3</experiments>
</comment>
<comment type="interaction">
    <interactant intactId="EBI-1955541">
        <id>Q53GS7</id>
    </interactant>
    <interactant intactId="EBI-358545">
        <id>Q9GZS3</id>
        <label>SKIC8</label>
    </interactant>
    <organismsDiffer>false</organismsDiffer>
    <experiments>3</experiments>
</comment>
<comment type="interaction">
    <interactant intactId="EBI-1955541">
        <id>Q53GS7</id>
    </interactant>
    <interactant intactId="EBI-358419">
        <id>Q12824</id>
        <label>SMARCB1</label>
    </interactant>
    <organismsDiffer>false</organismsDiffer>
    <experiments>3</experiments>
</comment>
<comment type="interaction">
    <interactant intactId="EBI-1955541">
        <id>Q53GS7</id>
    </interactant>
    <interactant intactId="EBI-12854506">
        <id>O60641-3</id>
        <label>SNAP91</label>
    </interactant>
    <organismsDiffer>false</organismsDiffer>
    <experiments>3</experiments>
</comment>
<comment type="interaction">
    <interactant intactId="EBI-1955541">
        <id>Q53GS7</id>
    </interactant>
    <interactant intactId="EBI-7082156">
        <id>Q7Z698</id>
        <label>SPRED2</label>
    </interactant>
    <organismsDiffer>false</organismsDiffer>
    <experiments>3</experiments>
</comment>
<comment type="interaction">
    <interactant intactId="EBI-1955541">
        <id>Q53GS7</id>
    </interactant>
    <interactant intactId="EBI-357085">
        <id>Q9UNE7</id>
        <label>STUB1</label>
    </interactant>
    <organismsDiffer>false</organismsDiffer>
    <experiments>3</experiments>
</comment>
<comment type="interaction">
    <interactant intactId="EBI-1955541">
        <id>Q53GS7</id>
    </interactant>
    <interactant intactId="EBI-714135">
        <id>O75558</id>
        <label>STX11</label>
    </interactant>
    <organismsDiffer>false</organismsDiffer>
    <experiments>3</experiments>
</comment>
<comment type="interaction">
    <interactant intactId="EBI-1955541">
        <id>Q53GS7</id>
    </interactant>
    <interactant intactId="EBI-711018">
        <id>P54274-2</id>
        <label>TERF1</label>
    </interactant>
    <organismsDiffer>false</organismsDiffer>
    <experiments>3</experiments>
</comment>
<comment type="interaction">
    <interactant intactId="EBI-1955541">
        <id>Q53GS7</id>
    </interactant>
    <interactant intactId="EBI-12833746">
        <id>Q5T0J7-2</id>
        <label>TEX35</label>
    </interactant>
    <organismsDiffer>false</organismsDiffer>
    <experiments>3</experiments>
</comment>
<comment type="interaction">
    <interactant intactId="EBI-1955541">
        <id>Q53GS7</id>
    </interactant>
    <interactant intactId="EBI-1049822">
        <id>O60220</id>
        <label>TIMM8A</label>
    </interactant>
    <organismsDiffer>false</organismsDiffer>
    <experiments>3</experiments>
</comment>
<comment type="interaction">
    <interactant intactId="EBI-1955541">
        <id>Q53GS7</id>
    </interactant>
    <interactant intactId="EBI-11525489">
        <id>Q86WT6-2</id>
        <label>TRIM69</label>
    </interactant>
    <organismsDiffer>false</organismsDiffer>
    <experiments>3</experiments>
</comment>
<comment type="interaction">
    <interactant intactId="EBI-1955541">
        <id>Q53GS7</id>
    </interactant>
    <interactant intactId="EBI-21353855">
        <id>Q99598</id>
        <label>TSNAX</label>
    </interactant>
    <organismsDiffer>false</organismsDiffer>
    <experiments>3</experiments>
</comment>
<comment type="interaction">
    <interactant intactId="EBI-1955541">
        <id>Q53GS7</id>
    </interactant>
    <interactant intactId="EBI-10187996">
        <id>O75379-2</id>
        <label>VAMP4</label>
    </interactant>
    <organismsDiffer>false</organismsDiffer>
    <experiments>3</experiments>
</comment>
<comment type="interaction">
    <interactant intactId="EBI-1955541">
        <id>Q53GS7</id>
    </interactant>
    <interactant intactId="EBI-2876965">
        <id>Q9Y2L8</id>
        <label>ZKSCAN5</label>
    </interactant>
    <organismsDiffer>false</organismsDiffer>
    <experiments>3</experiments>
</comment>
<comment type="interaction">
    <interactant intactId="EBI-1955541">
        <id>Q53GS7</id>
    </interactant>
    <interactant intactId="EBI-2813661">
        <id>Q8N895</id>
        <label>ZNF366</label>
    </interactant>
    <organismsDiffer>false</organismsDiffer>
    <experiments>3</experiments>
</comment>
<comment type="interaction">
    <interactant intactId="EBI-1955541">
        <id>Q53GS7</id>
    </interactant>
    <interactant intactId="EBI-8490788">
        <id>Q68EA5</id>
        <label>ZNF57</label>
    </interactant>
    <organismsDiffer>false</organismsDiffer>
    <experiments>3</experiments>
</comment>
<comment type="interaction">
    <interactant intactId="EBI-1955541">
        <id>Q53GS7</id>
    </interactant>
    <interactant intactId="EBI-10259496">
        <id>Q86V28</id>
    </interactant>
    <organismsDiffer>false</organismsDiffer>
    <experiments>3</experiments>
</comment>
<comment type="subcellular location">
    <subcellularLocation>
        <location evidence="3">Nucleus</location>
    </subcellularLocation>
    <subcellularLocation>
        <location evidence="3">Cytoplasm</location>
    </subcellularLocation>
    <text evidence="3">Shuttles between the nucleus and the cytoplasm (PubMed:12668658). Shuttling is essential for its mRNA export function (PubMed:12668658).</text>
</comment>
<comment type="subcellular location">
    <molecule>Isoform 1</molecule>
    <subcellularLocation>
        <location evidence="3">Cytoplasm</location>
    </subcellularLocation>
    <subcellularLocation>
        <location evidence="3">Nucleus</location>
        <location evidence="3">Nuclear pore complex</location>
    </subcellularLocation>
    <text evidence="3">Shuttles between the nucleus and the cytoplasm (PubMed:12668658). In the nucleus, isoform 1 localizes to the nuclear pore complex and nuclear envelope (PubMed:12668658). Shuttling is essential for its mRNA export function (PubMed:12668658).</text>
</comment>
<comment type="alternative products">
    <event type="alternative splicing"/>
    <isoform>
        <id>Q53GS7-1</id>
        <name>1</name>
        <name>hGle1B</name>
        <sequence type="displayed"/>
    </isoform>
    <isoform>
        <id>Q53GS7-2</id>
        <name>2</name>
        <name>hGle1A</name>
        <sequence type="described" ref="VSP_016486 VSP_016487"/>
    </isoform>
</comment>
<comment type="disease" evidence="7">
    <disease id="DI-00644">
        <name>Lethal congenital contracture syndrome 1</name>
        <acronym>LCCS1</acronym>
        <description>A form of lethal congenital contracture syndrome, an autosomal recessive disorder characterized by degeneration of anterior horn neurons, extreme skeletal muscle atrophy, and congenital non-progressive joint contractures (arthrogryposis). The contractures can involve the upper or lower limbs and/or the vertebral column, leading to various degrees of flexion or extension limitations evident at birth. LCCS1 patients manifest early fetal hydrops and akinesia, micrognathia, pulmonary hypoplasia, pterygia, and multiple joint contractures. It leads to prenatal death.</description>
        <dbReference type="MIM" id="253310"/>
    </disease>
    <text>The disease is caused by variants affecting the gene represented in this entry.</text>
</comment>
<comment type="disease" evidence="7">
    <disease id="DI-00643">
        <name>Congenital arthrogryposis with anterior horn cell disease</name>
        <acronym>CAAHD</acronym>
        <description>An autosomal recessive disorder characterized by fetal akinesia, arthrogryposis and motor neuron loss. The fetus often survives delivery, but dies early as a result of respiratory failure. Neuropathological findings resemble those of lethal congenital contracture syndrome type 1, but are less severe.</description>
        <dbReference type="MIM" id="611890"/>
    </disease>
    <text>The disease is caused by variants affecting the gene represented in this entry.</text>
</comment>
<comment type="miscellaneous">
    <molecule>Isoform 1</molecule>
    <text>Major isoform.</text>
</comment>
<comment type="similarity">
    <text evidence="13">Belongs to the GLE1 family.</text>
</comment>
<keyword id="KW-0002">3D-structure</keyword>
<keyword id="KW-0025">Alternative splicing</keyword>
<keyword id="KW-0175">Coiled coil</keyword>
<keyword id="KW-0963">Cytoplasm</keyword>
<keyword id="KW-0225">Disease variant</keyword>
<keyword id="KW-0509">mRNA transport</keyword>
<keyword id="KW-0906">Nuclear pore complex</keyword>
<keyword id="KW-0539">Nucleus</keyword>
<keyword id="KW-0597">Phosphoprotein</keyword>
<keyword id="KW-0653">Protein transport</keyword>
<keyword id="KW-1267">Proteomics identification</keyword>
<keyword id="KW-1185">Reference proteome</keyword>
<keyword id="KW-0811">Translocation</keyword>
<keyword id="KW-0813">Transport</keyword>
<feature type="chain" id="PRO_0000204822" description="mRNA export factor GLE1">
    <location>
        <begin position="1"/>
        <end position="698"/>
    </location>
</feature>
<feature type="region of interest" description="Interaction with NUP155">
    <location>
        <begin position="1"/>
        <end position="29"/>
    </location>
</feature>
<feature type="region of interest" description="Disordered" evidence="2">
    <location>
        <begin position="63"/>
        <end position="121"/>
    </location>
</feature>
<feature type="region of interest" description="Disordered" evidence="2">
    <location>
        <begin position="332"/>
        <end position="375"/>
    </location>
</feature>
<feature type="region of interest" description="Mediates the shuttling between the nucleus and the cytoplasm">
    <location>
        <begin position="444"/>
        <end position="483"/>
    </location>
</feature>
<feature type="region of interest" description="Interaction with NUP42" evidence="6">
    <location>
        <begin position="656"/>
        <end position="698"/>
    </location>
</feature>
<feature type="coiled-coil region" evidence="1">
    <location>
        <begin position="151"/>
        <end position="277"/>
    </location>
</feature>
<feature type="coiled-coil region" evidence="1">
    <location>
        <begin position="305"/>
        <end position="356"/>
    </location>
</feature>
<feature type="compositionally biased region" description="Low complexity" evidence="2">
    <location>
        <begin position="65"/>
        <end position="79"/>
    </location>
</feature>
<feature type="compositionally biased region" description="Low complexity" evidence="2">
    <location>
        <begin position="86"/>
        <end position="103"/>
    </location>
</feature>
<feature type="modified residue" description="Phosphoserine" evidence="17">
    <location>
        <position position="41"/>
    </location>
</feature>
<feature type="modified residue" description="Phosphoserine" evidence="15 16 17">
    <location>
        <position position="88"/>
    </location>
</feature>
<feature type="modified residue" description="Phosphoserine" evidence="16">
    <location>
        <position position="99"/>
    </location>
</feature>
<feature type="splice variant" id="VSP_016486" description="In isoform 2." evidence="11 12">
    <original>IEAI</original>
    <variation>YQAC</variation>
    <location>
        <begin position="656"/>
        <end position="659"/>
    </location>
</feature>
<feature type="splice variant" id="VSP_016487" description="In isoform 2." evidence="11 12">
    <location>
        <begin position="660"/>
        <end position="698"/>
    </location>
</feature>
<feature type="sequence variant" id="VAR_024056" description="In dbSNP:rs17852725." evidence="5">
    <original>G</original>
    <variation>D</variation>
    <location>
        <position position="130"/>
    </location>
</feature>
<feature type="sequence variant" id="VAR_043874" description="In LCCS1; allele Fin(Major); does not affect subcellular localization." evidence="7">
    <original>T</original>
    <variation>TPFQ</variation>
    <location>
        <position position="144"/>
    </location>
</feature>
<feature type="sequence variant" id="VAR_024057" description="In dbSNP:rs2275260.">
    <original>I</original>
    <variation>V</variation>
    <location>
        <position position="243"/>
    </location>
</feature>
<feature type="sequence variant" id="VAR_043875" description="In LCCS1; dbSNP:rs121434407." evidence="7">
    <original>R</original>
    <variation>H</variation>
    <location>
        <position position="569"/>
    </location>
</feature>
<feature type="sequence variant" id="VAR_024058" description="In dbSNP:rs17856852." evidence="5">
    <original>R</original>
    <variation>Q</variation>
    <location>
        <position position="590"/>
    </location>
</feature>
<feature type="sequence variant" id="VAR_043876" description="In CAAHD; dbSNP:rs121434408." evidence="7">
    <original>V</original>
    <variation>M</variation>
    <location>
        <position position="617"/>
    </location>
</feature>
<feature type="sequence variant" id="VAR_043877" description="In CAAHD; dbSNP:rs121434409." evidence="7">
    <original>I</original>
    <variation>T</variation>
    <location>
        <position position="684"/>
    </location>
</feature>
<feature type="sequence conflict" description="In Ref. 2; BAD96574." evidence="13" ref="2">
    <original>S</original>
    <variation>P</variation>
    <location>
        <position position="83"/>
    </location>
</feature>
<feature type="sequence conflict" description="In Ref. 2; BAD96562." evidence="13" ref="2">
    <original>F</original>
    <variation>S</variation>
    <location>
        <position position="172"/>
    </location>
</feature>
<feature type="sequence conflict" description="In Ref. 2; BAD96562." evidence="13" ref="2">
    <original>R</original>
    <variation>G</variation>
    <location>
        <position position="549"/>
    </location>
</feature>
<feature type="helix" evidence="18">
    <location>
        <begin position="385"/>
        <end position="403"/>
    </location>
</feature>
<feature type="turn" evidence="18">
    <location>
        <begin position="404"/>
        <end position="407"/>
    </location>
</feature>
<feature type="helix" evidence="18">
    <location>
        <begin position="413"/>
        <end position="424"/>
    </location>
</feature>
<feature type="turn" evidence="18">
    <location>
        <begin position="425"/>
        <end position="427"/>
    </location>
</feature>
<feature type="helix" evidence="18">
    <location>
        <begin position="428"/>
        <end position="431"/>
    </location>
</feature>
<feature type="helix" evidence="18">
    <location>
        <begin position="438"/>
        <end position="453"/>
    </location>
</feature>
<feature type="strand" evidence="18">
    <location>
        <begin position="460"/>
        <end position="464"/>
    </location>
</feature>
<feature type="helix" evidence="19">
    <location>
        <begin position="466"/>
        <end position="468"/>
    </location>
</feature>
<feature type="helix" evidence="18">
    <location>
        <begin position="470"/>
        <end position="490"/>
    </location>
</feature>
<feature type="turn" evidence="18">
    <location>
        <begin position="491"/>
        <end position="494"/>
    </location>
</feature>
<feature type="helix" evidence="18">
    <location>
        <begin position="496"/>
        <end position="498"/>
    </location>
</feature>
<feature type="helix" evidence="18">
    <location>
        <begin position="499"/>
        <end position="512"/>
    </location>
</feature>
<feature type="helix" evidence="18">
    <location>
        <begin position="514"/>
        <end position="527"/>
    </location>
</feature>
<feature type="helix" evidence="18">
    <location>
        <begin position="529"/>
        <end position="531"/>
    </location>
</feature>
<feature type="strand" evidence="18">
    <location>
        <begin position="540"/>
        <end position="542"/>
    </location>
</feature>
<feature type="helix" evidence="18">
    <location>
        <begin position="544"/>
        <end position="550"/>
    </location>
</feature>
<feature type="helix" evidence="18">
    <location>
        <begin position="564"/>
        <end position="580"/>
    </location>
</feature>
<feature type="helix" evidence="18">
    <location>
        <begin position="599"/>
        <end position="609"/>
    </location>
</feature>
<feature type="helix" evidence="18">
    <location>
        <begin position="617"/>
        <end position="636"/>
    </location>
</feature>
<feature type="helix" evidence="18">
    <location>
        <begin position="638"/>
        <end position="648"/>
    </location>
</feature>
<feature type="turn" evidence="18">
    <location>
        <begin position="649"/>
        <end position="651"/>
    </location>
</feature>
<feature type="helix" evidence="18">
    <location>
        <begin position="652"/>
        <end position="659"/>
    </location>
</feature>
<feature type="helix" evidence="18">
    <location>
        <begin position="662"/>
        <end position="664"/>
    </location>
</feature>
<feature type="helix" evidence="18">
    <location>
        <begin position="666"/>
        <end position="681"/>
    </location>
</feature>
<feature type="helix" evidence="18">
    <location>
        <begin position="693"/>
        <end position="697"/>
    </location>
</feature>
<protein>
    <recommendedName>
        <fullName evidence="9">mRNA export factor GLE1</fullName>
        <shortName evidence="11">hGLE1</shortName>
    </recommendedName>
    <alternativeName>
        <fullName evidence="10 14">GLE1 RNA export mediator</fullName>
    </alternativeName>
    <alternativeName>
        <fullName evidence="13">GLE1-like protein</fullName>
    </alternativeName>
    <alternativeName>
        <fullName evidence="13">Nucleoporin GLE1</fullName>
    </alternativeName>
</protein>
<reference key="1">
    <citation type="journal article" date="1998" name="Proc. Natl. Acad. Sci. U.S.A.">
        <title>The human homologue of Saccharomyces cerevisiae Gle1p is required for poly(A)+ RNA export.</title>
        <authorList>
            <person name="Watkins J.L."/>
            <person name="Murphy R."/>
            <person name="Emtage J.L.T."/>
            <person name="Wente S.R."/>
        </authorList>
    </citation>
    <scope>NUCLEOTIDE SEQUENCE [MRNA] (ISOFORM 2)</scope>
    <scope>FUNCTION</scope>
    <source>
        <tissue>Brain</tissue>
    </source>
</reference>
<reference key="2">
    <citation type="submission" date="2005-04" db="EMBL/GenBank/DDBJ databases">
        <authorList>
            <person name="Suzuki Y."/>
            <person name="Sugano S."/>
            <person name="Totoki Y."/>
            <person name="Toyoda A."/>
            <person name="Takeda T."/>
            <person name="Sakaki Y."/>
            <person name="Tanaka A."/>
            <person name="Yokoyama S."/>
        </authorList>
    </citation>
    <scope>NUCLEOTIDE SEQUENCE [LARGE SCALE MRNA] (ISOFORMS 1 AND 2)</scope>
    <source>
        <tissue>Liver</tissue>
    </source>
</reference>
<reference key="3">
    <citation type="journal article" date="2004" name="Nature">
        <title>DNA sequence and analysis of human chromosome 9.</title>
        <authorList>
            <person name="Humphray S.J."/>
            <person name="Oliver K."/>
            <person name="Hunt A.R."/>
            <person name="Plumb R.W."/>
            <person name="Loveland J.E."/>
            <person name="Howe K.L."/>
            <person name="Andrews T.D."/>
            <person name="Searle S."/>
            <person name="Hunt S.E."/>
            <person name="Scott C.E."/>
            <person name="Jones M.C."/>
            <person name="Ainscough R."/>
            <person name="Almeida J.P."/>
            <person name="Ambrose K.D."/>
            <person name="Ashwell R.I.S."/>
            <person name="Babbage A.K."/>
            <person name="Babbage S."/>
            <person name="Bagguley C.L."/>
            <person name="Bailey J."/>
            <person name="Banerjee R."/>
            <person name="Barker D.J."/>
            <person name="Barlow K.F."/>
            <person name="Bates K."/>
            <person name="Beasley H."/>
            <person name="Beasley O."/>
            <person name="Bird C.P."/>
            <person name="Bray-Allen S."/>
            <person name="Brown A.J."/>
            <person name="Brown J.Y."/>
            <person name="Burford D."/>
            <person name="Burrill W."/>
            <person name="Burton J."/>
            <person name="Carder C."/>
            <person name="Carter N.P."/>
            <person name="Chapman J.C."/>
            <person name="Chen Y."/>
            <person name="Clarke G."/>
            <person name="Clark S.Y."/>
            <person name="Clee C.M."/>
            <person name="Clegg S."/>
            <person name="Collier R.E."/>
            <person name="Corby N."/>
            <person name="Crosier M."/>
            <person name="Cummings A.T."/>
            <person name="Davies J."/>
            <person name="Dhami P."/>
            <person name="Dunn M."/>
            <person name="Dutta I."/>
            <person name="Dyer L.W."/>
            <person name="Earthrowl M.E."/>
            <person name="Faulkner L."/>
            <person name="Fleming C.J."/>
            <person name="Frankish A."/>
            <person name="Frankland J.A."/>
            <person name="French L."/>
            <person name="Fricker D.G."/>
            <person name="Garner P."/>
            <person name="Garnett J."/>
            <person name="Ghori J."/>
            <person name="Gilbert J.G.R."/>
            <person name="Glison C."/>
            <person name="Grafham D.V."/>
            <person name="Gribble S."/>
            <person name="Griffiths C."/>
            <person name="Griffiths-Jones S."/>
            <person name="Grocock R."/>
            <person name="Guy J."/>
            <person name="Hall R.E."/>
            <person name="Hammond S."/>
            <person name="Harley J.L."/>
            <person name="Harrison E.S.I."/>
            <person name="Hart E.A."/>
            <person name="Heath P.D."/>
            <person name="Henderson C.D."/>
            <person name="Hopkins B.L."/>
            <person name="Howard P.J."/>
            <person name="Howden P.J."/>
            <person name="Huckle E."/>
            <person name="Johnson C."/>
            <person name="Johnson D."/>
            <person name="Joy A.A."/>
            <person name="Kay M."/>
            <person name="Keenan S."/>
            <person name="Kershaw J.K."/>
            <person name="Kimberley A.M."/>
            <person name="King A."/>
            <person name="Knights A."/>
            <person name="Laird G.K."/>
            <person name="Langford C."/>
            <person name="Lawlor S."/>
            <person name="Leongamornlert D.A."/>
            <person name="Leversha M."/>
            <person name="Lloyd C."/>
            <person name="Lloyd D.M."/>
            <person name="Lovell J."/>
            <person name="Martin S."/>
            <person name="Mashreghi-Mohammadi M."/>
            <person name="Matthews L."/>
            <person name="McLaren S."/>
            <person name="McLay K.E."/>
            <person name="McMurray A."/>
            <person name="Milne S."/>
            <person name="Nickerson T."/>
            <person name="Nisbett J."/>
            <person name="Nordsiek G."/>
            <person name="Pearce A.V."/>
            <person name="Peck A.I."/>
            <person name="Porter K.M."/>
            <person name="Pandian R."/>
            <person name="Pelan S."/>
            <person name="Phillimore B."/>
            <person name="Povey S."/>
            <person name="Ramsey Y."/>
            <person name="Rand V."/>
            <person name="Scharfe M."/>
            <person name="Sehra H.K."/>
            <person name="Shownkeen R."/>
            <person name="Sims S.K."/>
            <person name="Skuce C.D."/>
            <person name="Smith M."/>
            <person name="Steward C.A."/>
            <person name="Swarbreck D."/>
            <person name="Sycamore N."/>
            <person name="Tester J."/>
            <person name="Thorpe A."/>
            <person name="Tracey A."/>
            <person name="Tromans A."/>
            <person name="Thomas D.W."/>
            <person name="Wall M."/>
            <person name="Wallis J.M."/>
            <person name="West A.P."/>
            <person name="Whitehead S.L."/>
            <person name="Willey D.L."/>
            <person name="Williams S.A."/>
            <person name="Wilming L."/>
            <person name="Wray P.W."/>
            <person name="Young L."/>
            <person name="Ashurst J.L."/>
            <person name="Coulson A."/>
            <person name="Blocker H."/>
            <person name="Durbin R.M."/>
            <person name="Sulston J.E."/>
            <person name="Hubbard T."/>
            <person name="Jackson M.J."/>
            <person name="Bentley D.R."/>
            <person name="Beck S."/>
            <person name="Rogers J."/>
            <person name="Dunham I."/>
        </authorList>
    </citation>
    <scope>NUCLEOTIDE SEQUENCE [LARGE SCALE GENOMIC DNA]</scope>
</reference>
<reference key="4">
    <citation type="journal article" date="2004" name="Genome Res.">
        <title>The status, quality, and expansion of the NIH full-length cDNA project: the Mammalian Gene Collection (MGC).</title>
        <authorList>
            <consortium name="The MGC Project Team"/>
        </authorList>
    </citation>
    <scope>NUCLEOTIDE SEQUENCE [LARGE SCALE MRNA] (ISOFORM 1)</scope>
    <scope>VARIANTS ASP-130 AND GLN-590</scope>
    <source>
        <tissue>Testis</tissue>
    </source>
</reference>
<reference key="5">
    <citation type="journal article" date="2007" name="BMC Genomics">
        <title>The full-ORF clone resource of the German cDNA consortium.</title>
        <authorList>
            <person name="Bechtel S."/>
            <person name="Rosenfelder H."/>
            <person name="Duda A."/>
            <person name="Schmidt C.P."/>
            <person name="Ernst U."/>
            <person name="Wellenreuther R."/>
            <person name="Mehrle A."/>
            <person name="Schuster C."/>
            <person name="Bahr A."/>
            <person name="Bloecker H."/>
            <person name="Heubner D."/>
            <person name="Hoerlein A."/>
            <person name="Michel G."/>
            <person name="Wedler H."/>
            <person name="Koehrer K."/>
            <person name="Ottenwaelder B."/>
            <person name="Poustka A."/>
            <person name="Wiemann S."/>
            <person name="Schupp I."/>
        </authorList>
    </citation>
    <scope>NUCLEOTIDE SEQUENCE [LARGE SCALE MRNA] OF 136-698 (ISOFORM 1)</scope>
</reference>
<reference key="6">
    <citation type="journal article" date="2003" name="J. Cell Biol.">
        <title>An essential role for hGle1 nucleocytoplasmic shuttling in mRNA export.</title>
        <authorList>
            <person name="Kendirgi F."/>
            <person name="Barry D.M."/>
            <person name="Griffis E.R."/>
            <person name="Powers M.A."/>
            <person name="Wente S.R."/>
        </authorList>
    </citation>
    <scope>ALTERNATIVE SPLICING (ISOFORMS 1 AND 2)</scope>
    <scope>FUNCTION</scope>
    <scope>SUBCELLULAR LOCATION</scope>
</reference>
<reference key="7">
    <citation type="journal article" date="2004" name="Mol. Cell. Proteomics">
        <title>The mRNA export factor human Gle1 interacts with the nuclear pore complex protein Nup155.</title>
        <authorList>
            <person name="Rayala H.J."/>
            <person name="Kendirgi F."/>
            <person name="Barry D.M."/>
            <person name="Majerus P.W."/>
            <person name="Wente S.R."/>
        </authorList>
    </citation>
    <scope>INTERACTION WITH NUP155</scope>
</reference>
<reference key="8">
    <citation type="journal article" date="2005" name="Mol. Biol. Cell">
        <title>Interaction between the shuttling mRNA export factor Gle1 and the nucleoporin hCG1: a conserved mechanism in the export of Hsp70 mRNA.</title>
        <authorList>
            <person name="Kendirgi F."/>
            <person name="Rexer D.J."/>
            <person name="Alcazar-Roman A.R."/>
            <person name="Onishko H.M."/>
            <person name="Wente S.R."/>
        </authorList>
    </citation>
    <scope>FUNCTION</scope>
    <scope>INTERACTION WITH NUP42 AND NUP155</scope>
</reference>
<reference key="9">
    <citation type="journal article" date="2009" name="Sci. Signal.">
        <title>Quantitative phosphoproteomic analysis of T cell receptor signaling reveals system-wide modulation of protein-protein interactions.</title>
        <authorList>
            <person name="Mayya V."/>
            <person name="Lundgren D.H."/>
            <person name="Hwang S.-I."/>
            <person name="Rezaul K."/>
            <person name="Wu L."/>
            <person name="Eng J.K."/>
            <person name="Rodionov V."/>
            <person name="Han D.K."/>
        </authorList>
    </citation>
    <scope>PHOSPHORYLATION [LARGE SCALE ANALYSIS] AT SER-88</scope>
    <scope>IDENTIFICATION BY MASS SPECTROMETRY [LARGE SCALE ANALYSIS]</scope>
    <source>
        <tissue>Leukemic T-cell</tissue>
    </source>
</reference>
<reference key="10">
    <citation type="journal article" date="2010" name="Sci. Signal.">
        <title>Quantitative phosphoproteomics reveals widespread full phosphorylation site occupancy during mitosis.</title>
        <authorList>
            <person name="Olsen J.V."/>
            <person name="Vermeulen M."/>
            <person name="Santamaria A."/>
            <person name="Kumar C."/>
            <person name="Miller M.L."/>
            <person name="Jensen L.J."/>
            <person name="Gnad F."/>
            <person name="Cox J."/>
            <person name="Jensen T.S."/>
            <person name="Nigg E.A."/>
            <person name="Brunak S."/>
            <person name="Mann M."/>
        </authorList>
    </citation>
    <scope>PHOSPHORYLATION [LARGE SCALE ANALYSIS] AT SER-88 AND SER-99</scope>
    <scope>IDENTIFICATION BY MASS SPECTROMETRY [LARGE SCALE ANALYSIS]</scope>
    <source>
        <tissue>Cervix carcinoma</tissue>
    </source>
</reference>
<reference key="11">
    <citation type="journal article" date="2013" name="J. Proteome Res.">
        <title>Toward a comprehensive characterization of a human cancer cell phosphoproteome.</title>
        <authorList>
            <person name="Zhou H."/>
            <person name="Di Palma S."/>
            <person name="Preisinger C."/>
            <person name="Peng M."/>
            <person name="Polat A.N."/>
            <person name="Heck A.J."/>
            <person name="Mohammed S."/>
        </authorList>
    </citation>
    <scope>PHOSPHORYLATION [LARGE SCALE ANALYSIS] AT SER-41 AND SER-88</scope>
    <scope>IDENTIFICATION BY MASS SPECTROMETRY [LARGE SCALE ANALYSIS]</scope>
    <source>
        <tissue>Erythroleukemia</tissue>
    </source>
</reference>
<reference key="12">
    <citation type="journal article" date="2008" name="Nat. Genet.">
        <title>Mutations in mRNA export mediator GLE1 result in a fetal motoneuron disease.</title>
        <authorList>
            <person name="Nousiainen H.O."/>
            <person name="Kestilae M."/>
            <person name="Pakkasjaervi N."/>
            <person name="Honkala H."/>
            <person name="Kuure S."/>
            <person name="Tallila J."/>
            <person name="Vuopala K."/>
            <person name="Ignatius J."/>
            <person name="Herva R."/>
            <person name="Peltonen L."/>
        </authorList>
    </citation>
    <scope>VARIANTS LCCS1 PRO-PHE-GLN-144 INS AND HIS-569</scope>
    <scope>VARIANTS CAAHD MET-617 AND THR-684</scope>
    <scope>CHARACTERIZATION OF VARIANT LCCS1 PRO-PHE-GLN-144 INS</scope>
</reference>
<organism>
    <name type="scientific">Homo sapiens</name>
    <name type="common">Human</name>
    <dbReference type="NCBI Taxonomy" id="9606"/>
    <lineage>
        <taxon>Eukaryota</taxon>
        <taxon>Metazoa</taxon>
        <taxon>Chordata</taxon>
        <taxon>Craniata</taxon>
        <taxon>Vertebrata</taxon>
        <taxon>Euteleostomi</taxon>
        <taxon>Mammalia</taxon>
        <taxon>Eutheria</taxon>
        <taxon>Euarchontoglires</taxon>
        <taxon>Primates</taxon>
        <taxon>Haplorrhini</taxon>
        <taxon>Catarrhini</taxon>
        <taxon>Hominidae</taxon>
        <taxon>Homo</taxon>
    </lineage>
</organism>